<gene>
    <name type="primary">TMEM59</name>
    <name type="synonym">C1orf8</name>
    <name type="ORF">HSPC001</name>
    <name type="ORF">UNQ169/PRO195</name>
</gene>
<organism>
    <name type="scientific">Homo sapiens</name>
    <name type="common">Human</name>
    <dbReference type="NCBI Taxonomy" id="9606"/>
    <lineage>
        <taxon>Eukaryota</taxon>
        <taxon>Metazoa</taxon>
        <taxon>Chordata</taxon>
        <taxon>Craniata</taxon>
        <taxon>Vertebrata</taxon>
        <taxon>Euteleostomi</taxon>
        <taxon>Mammalia</taxon>
        <taxon>Eutheria</taxon>
        <taxon>Euarchontoglires</taxon>
        <taxon>Primates</taxon>
        <taxon>Haplorrhini</taxon>
        <taxon>Catarrhini</taxon>
        <taxon>Hominidae</taxon>
        <taxon>Homo</taxon>
    </lineage>
</organism>
<accession>Q9BXS4</accession>
<accession>B3KQL7</accession>
<accession>O75393</accession>
<accession>Q4VBP9</accession>
<accession>Q5T705</accession>
<accession>Q96KX7</accession>
<dbReference type="EMBL" id="AF290615">
    <property type="protein sequence ID" value="AAK28026.1"/>
    <property type="molecule type" value="mRNA"/>
</dbReference>
<dbReference type="EMBL" id="AF047439">
    <property type="protein sequence ID" value="AAC39890.1"/>
    <property type="status" value="ALT_FRAME"/>
    <property type="molecule type" value="mRNA"/>
</dbReference>
<dbReference type="EMBL" id="AY359029">
    <property type="protein sequence ID" value="AAQ89388.1"/>
    <property type="molecule type" value="mRNA"/>
</dbReference>
<dbReference type="EMBL" id="AK075187">
    <property type="protein sequence ID" value="BAG52079.1"/>
    <property type="molecule type" value="mRNA"/>
</dbReference>
<dbReference type="EMBL" id="AK075505">
    <property type="protein sequence ID" value="BAC11658.1"/>
    <property type="molecule type" value="mRNA"/>
</dbReference>
<dbReference type="EMBL" id="AL353898">
    <property type="status" value="NOT_ANNOTATED_CDS"/>
    <property type="molecule type" value="Genomic_DNA"/>
</dbReference>
<dbReference type="EMBL" id="CH471059">
    <property type="protein sequence ID" value="EAX06707.1"/>
    <property type="molecule type" value="Genomic_DNA"/>
</dbReference>
<dbReference type="EMBL" id="BC003106">
    <property type="protein sequence ID" value="AAH03106.1"/>
    <property type="status" value="ALT_INIT"/>
    <property type="molecule type" value="mRNA"/>
</dbReference>
<dbReference type="EMBL" id="BC016374">
    <property type="protein sequence ID" value="AAH16374.1"/>
    <property type="molecule type" value="mRNA"/>
</dbReference>
<dbReference type="EMBL" id="BC095464">
    <property type="protein sequence ID" value="AAH95464.1"/>
    <property type="molecule type" value="mRNA"/>
</dbReference>
<dbReference type="CCDS" id="CCDS586.1"/>
<dbReference type="RefSeq" id="NP_001291972.1">
    <property type="nucleotide sequence ID" value="NM_001305043.1"/>
</dbReference>
<dbReference type="RefSeq" id="NP_001291978.1">
    <property type="nucleotide sequence ID" value="NM_001305049.1"/>
</dbReference>
<dbReference type="RefSeq" id="NP_001291979.1">
    <property type="nucleotide sequence ID" value="NM_001305050.1"/>
</dbReference>
<dbReference type="RefSeq" id="NP_001291980.1">
    <property type="nucleotide sequence ID" value="NM_001305051.1"/>
</dbReference>
<dbReference type="RefSeq" id="NP_001291981.1">
    <property type="nucleotide sequence ID" value="NM_001305052.1"/>
</dbReference>
<dbReference type="RefSeq" id="NP_001291995.1">
    <property type="nucleotide sequence ID" value="NM_001305066.1"/>
</dbReference>
<dbReference type="RefSeq" id="NP_004863.2">
    <property type="nucleotide sequence ID" value="NM_004872.4"/>
</dbReference>
<dbReference type="BioGRID" id="114904">
    <property type="interactions" value="238"/>
</dbReference>
<dbReference type="FunCoup" id="Q9BXS4">
    <property type="interactions" value="770"/>
</dbReference>
<dbReference type="IntAct" id="Q9BXS4">
    <property type="interactions" value="149"/>
</dbReference>
<dbReference type="MINT" id="Q9BXS4"/>
<dbReference type="STRING" id="9606.ENSP00000234831"/>
<dbReference type="TCDB" id="8.A.84.1.4">
    <property type="family name" value="the insulin secretion regulator tmem59 (tmem59) family"/>
</dbReference>
<dbReference type="GlyCosmos" id="Q9BXS4">
    <property type="glycosylation" value="1 site, No reported glycans"/>
</dbReference>
<dbReference type="GlyGen" id="Q9BXS4">
    <property type="glycosylation" value="4 sites, 2 O-linked glycans (3 sites)"/>
</dbReference>
<dbReference type="iPTMnet" id="Q9BXS4"/>
<dbReference type="PhosphoSitePlus" id="Q9BXS4"/>
<dbReference type="SwissPalm" id="Q9BXS4"/>
<dbReference type="BioMuta" id="TMEM59"/>
<dbReference type="DMDM" id="18202737"/>
<dbReference type="jPOST" id="Q9BXS4"/>
<dbReference type="MassIVE" id="Q9BXS4"/>
<dbReference type="PaxDb" id="9606-ENSP00000234831"/>
<dbReference type="PeptideAtlas" id="Q9BXS4"/>
<dbReference type="ProteomicsDB" id="79491"/>
<dbReference type="Pumba" id="Q9BXS4"/>
<dbReference type="Antibodypedia" id="46893">
    <property type="antibodies" value="96 antibodies from 31 providers"/>
</dbReference>
<dbReference type="DNASU" id="9528"/>
<dbReference type="Ensembl" id="ENST00000234831.10">
    <property type="protein sequence ID" value="ENSP00000234831.5"/>
    <property type="gene ID" value="ENSG00000116209.12"/>
</dbReference>
<dbReference type="GeneID" id="9528"/>
<dbReference type="KEGG" id="hsa:9528"/>
<dbReference type="MANE-Select" id="ENST00000234831.10">
    <property type="protein sequence ID" value="ENSP00000234831.5"/>
    <property type="RefSeq nucleotide sequence ID" value="NM_004872.5"/>
    <property type="RefSeq protein sequence ID" value="NP_004863.2"/>
</dbReference>
<dbReference type="UCSC" id="uc001cwp.4">
    <property type="organism name" value="human"/>
</dbReference>
<dbReference type="AGR" id="HGNC:1239"/>
<dbReference type="CTD" id="9528"/>
<dbReference type="DisGeNET" id="9528"/>
<dbReference type="GeneCards" id="TMEM59"/>
<dbReference type="HGNC" id="HGNC:1239">
    <property type="gene designation" value="TMEM59"/>
</dbReference>
<dbReference type="HPA" id="ENSG00000116209">
    <property type="expression patterns" value="Low tissue specificity"/>
</dbReference>
<dbReference type="neXtProt" id="NX_Q9BXS4"/>
<dbReference type="OpenTargets" id="ENSG00000116209"/>
<dbReference type="PharmGKB" id="PA25620"/>
<dbReference type="VEuPathDB" id="HostDB:ENSG00000116209"/>
<dbReference type="eggNOG" id="ENOG502QUIS">
    <property type="taxonomic scope" value="Eukaryota"/>
</dbReference>
<dbReference type="GeneTree" id="ENSGT00390000008279"/>
<dbReference type="HOGENOM" id="CLU_059747_1_0_1"/>
<dbReference type="InParanoid" id="Q9BXS4"/>
<dbReference type="OMA" id="MGCHNQL"/>
<dbReference type="OrthoDB" id="6371519at2759"/>
<dbReference type="PAN-GO" id="Q9BXS4">
    <property type="GO annotations" value="3 GO annotations based on evolutionary models"/>
</dbReference>
<dbReference type="PhylomeDB" id="Q9BXS4"/>
<dbReference type="TreeFam" id="TF331226"/>
<dbReference type="PathwayCommons" id="Q9BXS4"/>
<dbReference type="Reactome" id="R-HSA-9013407">
    <property type="pathway name" value="RHOH GTPase cycle"/>
</dbReference>
<dbReference type="Reactome" id="R-HSA-9696273">
    <property type="pathway name" value="RND1 GTPase cycle"/>
</dbReference>
<dbReference type="SignaLink" id="Q9BXS4"/>
<dbReference type="BioGRID-ORCS" id="9528">
    <property type="hits" value="9 hits in 1068 CRISPR screens"/>
</dbReference>
<dbReference type="ChiTaRS" id="TMEM59">
    <property type="organism name" value="human"/>
</dbReference>
<dbReference type="GeneWiki" id="TMEM59"/>
<dbReference type="GenomeRNAi" id="9528"/>
<dbReference type="Pharos" id="Q9BXS4">
    <property type="development level" value="Tbio"/>
</dbReference>
<dbReference type="PRO" id="PR:Q9BXS4"/>
<dbReference type="Proteomes" id="UP000005640">
    <property type="component" value="Chromosome 1"/>
</dbReference>
<dbReference type="RNAct" id="Q9BXS4">
    <property type="molecule type" value="protein"/>
</dbReference>
<dbReference type="Bgee" id="ENSG00000116209">
    <property type="expression patterns" value="Expressed in olfactory segment of nasal mucosa and 208 other cell types or tissues"/>
</dbReference>
<dbReference type="ExpressionAtlas" id="Q9BXS4">
    <property type="expression patterns" value="baseline and differential"/>
</dbReference>
<dbReference type="GO" id="GO:0070062">
    <property type="term" value="C:extracellular exosome"/>
    <property type="evidence" value="ECO:0007005"/>
    <property type="project" value="UniProtKB"/>
</dbReference>
<dbReference type="GO" id="GO:0000137">
    <property type="term" value="C:Golgi cis cisterna"/>
    <property type="evidence" value="ECO:0000314"/>
    <property type="project" value="UniProtKB"/>
</dbReference>
<dbReference type="GO" id="GO:0005797">
    <property type="term" value="C:Golgi medial cisterna"/>
    <property type="evidence" value="ECO:0000314"/>
    <property type="project" value="UniProtKB"/>
</dbReference>
<dbReference type="GO" id="GO:0000139">
    <property type="term" value="C:Golgi membrane"/>
    <property type="evidence" value="ECO:0007669"/>
    <property type="project" value="UniProtKB-SubCell"/>
</dbReference>
<dbReference type="GO" id="GO:0000138">
    <property type="term" value="C:Golgi trans cisterna"/>
    <property type="evidence" value="ECO:0000314"/>
    <property type="project" value="UniProtKB"/>
</dbReference>
<dbReference type="GO" id="GO:0005770">
    <property type="term" value="C:late endosome"/>
    <property type="evidence" value="ECO:0000314"/>
    <property type="project" value="UniProtKB"/>
</dbReference>
<dbReference type="GO" id="GO:0031902">
    <property type="term" value="C:late endosome membrane"/>
    <property type="evidence" value="ECO:0007669"/>
    <property type="project" value="UniProtKB-SubCell"/>
</dbReference>
<dbReference type="GO" id="GO:0005765">
    <property type="term" value="C:lysosomal membrane"/>
    <property type="evidence" value="ECO:0007669"/>
    <property type="project" value="UniProtKB-SubCell"/>
</dbReference>
<dbReference type="GO" id="GO:0005764">
    <property type="term" value="C:lysosome"/>
    <property type="evidence" value="ECO:0000314"/>
    <property type="project" value="UniProtKB"/>
</dbReference>
<dbReference type="GO" id="GO:0005886">
    <property type="term" value="C:plasma membrane"/>
    <property type="evidence" value="ECO:0007669"/>
    <property type="project" value="UniProtKB-SubCell"/>
</dbReference>
<dbReference type="GO" id="GO:0004175">
    <property type="term" value="F:endopeptidase activity"/>
    <property type="evidence" value="ECO:0007669"/>
    <property type="project" value="Ensembl"/>
</dbReference>
<dbReference type="GO" id="GO:0006914">
    <property type="term" value="P:autophagy"/>
    <property type="evidence" value="ECO:0007669"/>
    <property type="project" value="UniProtKB-KW"/>
</dbReference>
<dbReference type="GO" id="GO:1903077">
    <property type="term" value="P:negative regulation of protein localization to plasma membrane"/>
    <property type="evidence" value="ECO:0000314"/>
    <property type="project" value="UniProtKB"/>
</dbReference>
<dbReference type="GO" id="GO:0010508">
    <property type="term" value="P:positive regulation of autophagy"/>
    <property type="evidence" value="ECO:0000315"/>
    <property type="project" value="UniProtKB"/>
</dbReference>
<dbReference type="GO" id="GO:0006486">
    <property type="term" value="P:protein glycosylation"/>
    <property type="evidence" value="ECO:0000314"/>
    <property type="project" value="UniProtKB"/>
</dbReference>
<dbReference type="InterPro" id="IPR022065">
    <property type="entry name" value="Uncharacterised_TMEM59"/>
</dbReference>
<dbReference type="PANTHER" id="PTHR28652:SF3">
    <property type="entry name" value="TRANSMEMBRANE PROTEIN 59"/>
    <property type="match status" value="1"/>
</dbReference>
<dbReference type="PANTHER" id="PTHR28652">
    <property type="entry name" value="TRANSMEMBRANE PROTEIN 59-LIKE PROTEIN"/>
    <property type="match status" value="1"/>
</dbReference>
<dbReference type="Pfam" id="PF12280">
    <property type="entry name" value="BSMAP"/>
    <property type="match status" value="1"/>
</dbReference>
<name>TMM59_HUMAN</name>
<comment type="function">
    <text evidence="4 5 6">Acts as a regulator of autophagy in response to S.aureus infection by promoting activation of LC3 (MAP1LC3A, MAP1LC3B or MAP1LC3C). Acts by interacting with ATG16L1, leading to promote a functional complex between LC3 and ATG16L1 and promoting LC3 lipidation and subsequent activation of autophagy (PubMed:23376921, PubMed:27273576). Modulates the O-glycosylation and complex N-glycosylation steps occurring during the Golgi maturation of several proteins such as APP, BACE1, SEAP or PRNP (PubMed:20427278). Inhibits APP transport to the cell surface and further shedding (PubMed:20427278).</text>
</comment>
<comment type="subunit">
    <text evidence="5 6">Interacts with ATG16L1 (via WD repeats).</text>
</comment>
<comment type="interaction">
    <interactant intactId="EBI-7054441">
        <id>Q9BXS4</id>
    </interactant>
    <interactant intactId="EBI-535909">
        <id>Q676U5</id>
        <label>ATG16L1</label>
    </interactant>
    <organismsDiffer>false</organismsDiffer>
    <experiments>6</experiments>
</comment>
<comment type="subcellular location">
    <subcellularLocation>
        <location evidence="5 6">Late endosome membrane</location>
        <topology evidence="2">Single-pass type I membrane protein</topology>
    </subcellularLocation>
    <subcellularLocation>
        <location evidence="5 6">Lysosome membrane</location>
        <topology evidence="2">Single-pass type I membrane protein</topology>
    </subcellularLocation>
    <subcellularLocation>
        <location evidence="5">Cell membrane</location>
        <topology evidence="2">Single-pass type I membrane protein</topology>
    </subcellularLocation>
    <subcellularLocation>
        <location evidence="4">Golgi apparatus membrane</location>
        <topology evidence="2">Single-pass type I membrane protein</topology>
    </subcellularLocation>
    <text evidence="5">Mainly localizes to late endosomes/lysosomes. Probably first exported to the cell surface and then actively endocytosed to transiently localize in early endosomes on its way to the late endosomal/lysosomal compartment where it becomes quickly degraded.</text>
</comment>
<comment type="domain">
    <text evidence="5">The ATG16L1-binding motif mediates interaction with ATG16L1 and promotes autophagy.</text>
</comment>
<comment type="PTM">
    <text evidence="4">N-glycosylated.</text>
</comment>
<comment type="similarity">
    <text evidence="7">Belongs to the TMEM59 family.</text>
</comment>
<comment type="sequence caution" evidence="7">
    <conflict type="frameshift">
        <sequence resource="EMBL-CDS" id="AAC39890"/>
    </conflict>
</comment>
<comment type="sequence caution" evidence="7">
    <conflict type="erroneous initiation">
        <sequence resource="EMBL-CDS" id="AAH03106"/>
    </conflict>
    <text>Truncated N-terminus.</text>
</comment>
<sequence length="323" mass="36223">MAAPKGSLWVRTQLGLPPLLLLTMALAGGSGTASAEAFDSVLGDTASCHRACQLTYPLHTYPKEEELYACQRGCRLFSICQFVDDGIDLNRTKLECESACTEAYSQSDEQYACHLGCQNQLPFAELRQEQLMSLMPKMHLLFPLTLVRSFWSDMMDSAQSFITSSWTFYLQADDGKIVIFQSKPEIQYAPHLEQEPTNLRESSLSKMSYLQMRNSQAHRNFLEDGESDGFLRCLSLNSGWILTTTLVLSVMVLLWICCATVATAVEQYVPSEKLSIYGDLEFMNEQKLNRYPASSLVVVRSKTEDHEEAGPLPTKVNLAHSEI</sequence>
<reference key="1">
    <citation type="submission" date="2000-07" db="EMBL/GenBank/DDBJ databases">
        <title>Homo sapiens liver membrane-bound protein mRNA.</title>
        <authorList>
            <person name="Qu X."/>
            <person name="Zhang C."/>
            <person name="Zhai Y."/>
            <person name="Wu S."/>
            <person name="Yu Y."/>
            <person name="Wei H."/>
            <person name="Xing G."/>
            <person name="Lu C."/>
            <person name="Zhou G."/>
            <person name="Dong C."/>
            <person name="He F."/>
        </authorList>
    </citation>
    <scope>NUCLEOTIDE SEQUENCE [MRNA]</scope>
    <source>
        <tissue>Fetal liver</tissue>
    </source>
</reference>
<reference key="2">
    <citation type="journal article" date="2000" name="Genome Res.">
        <title>Cloning and functional analysis of cDNAs with open reading frames for 300 previously undefined genes expressed in CD34+ hematopoietic stem/progenitor cells.</title>
        <authorList>
            <person name="Zhang Q.-H."/>
            <person name="Ye M."/>
            <person name="Wu X.-Y."/>
            <person name="Ren S.-X."/>
            <person name="Zhao M."/>
            <person name="Zhao C.-J."/>
            <person name="Fu G."/>
            <person name="Shen Y."/>
            <person name="Fan H.-Y."/>
            <person name="Lu G."/>
            <person name="Zhong M."/>
            <person name="Xu X.-R."/>
            <person name="Han Z.-G."/>
            <person name="Zhang J.-W."/>
            <person name="Tao J."/>
            <person name="Huang Q.-H."/>
            <person name="Zhou J."/>
            <person name="Hu G.-X."/>
            <person name="Gu J."/>
            <person name="Chen S.-J."/>
            <person name="Chen Z."/>
        </authorList>
    </citation>
    <scope>NUCLEOTIDE SEQUENCE [LARGE SCALE MRNA]</scope>
    <scope>VARIANT VAL-46</scope>
    <source>
        <tissue>Umbilical cord blood</tissue>
    </source>
</reference>
<reference key="3">
    <citation type="journal article" date="2003" name="Genome Res.">
        <title>The secreted protein discovery initiative (SPDI), a large-scale effort to identify novel human secreted and transmembrane proteins: a bioinformatics assessment.</title>
        <authorList>
            <person name="Clark H.F."/>
            <person name="Gurney A.L."/>
            <person name="Abaya E."/>
            <person name="Baker K."/>
            <person name="Baldwin D.T."/>
            <person name="Brush J."/>
            <person name="Chen J."/>
            <person name="Chow B."/>
            <person name="Chui C."/>
            <person name="Crowley C."/>
            <person name="Currell B."/>
            <person name="Deuel B."/>
            <person name="Dowd P."/>
            <person name="Eaton D."/>
            <person name="Foster J.S."/>
            <person name="Grimaldi C."/>
            <person name="Gu Q."/>
            <person name="Hass P.E."/>
            <person name="Heldens S."/>
            <person name="Huang A."/>
            <person name="Kim H.S."/>
            <person name="Klimowski L."/>
            <person name="Jin Y."/>
            <person name="Johnson S."/>
            <person name="Lee J."/>
            <person name="Lewis L."/>
            <person name="Liao D."/>
            <person name="Mark M.R."/>
            <person name="Robbie E."/>
            <person name="Sanchez C."/>
            <person name="Schoenfeld J."/>
            <person name="Seshagiri S."/>
            <person name="Simmons L."/>
            <person name="Singh J."/>
            <person name="Smith V."/>
            <person name="Stinson J."/>
            <person name="Vagts A."/>
            <person name="Vandlen R.L."/>
            <person name="Watanabe C."/>
            <person name="Wieand D."/>
            <person name="Woods K."/>
            <person name="Xie M.-H."/>
            <person name="Yansura D.G."/>
            <person name="Yi S."/>
            <person name="Yu G."/>
            <person name="Yuan J."/>
            <person name="Zhang M."/>
            <person name="Zhang Z."/>
            <person name="Goddard A.D."/>
            <person name="Wood W.I."/>
            <person name="Godowski P.J."/>
            <person name="Gray A.M."/>
        </authorList>
    </citation>
    <scope>NUCLEOTIDE SEQUENCE [LARGE SCALE MRNA]</scope>
</reference>
<reference key="4">
    <citation type="journal article" date="2005" name="DNA Res.">
        <title>Signal sequence and keyword trap in silico for selection of full-length human cDNAs encoding secretion or membrane proteins from oligo-capped cDNA libraries.</title>
        <authorList>
            <person name="Otsuki T."/>
            <person name="Ota T."/>
            <person name="Nishikawa T."/>
            <person name="Hayashi K."/>
            <person name="Suzuki Y."/>
            <person name="Yamamoto J."/>
            <person name="Wakamatsu A."/>
            <person name="Kimura K."/>
            <person name="Sakamoto K."/>
            <person name="Hatano N."/>
            <person name="Kawai Y."/>
            <person name="Ishii S."/>
            <person name="Saito K."/>
            <person name="Kojima S."/>
            <person name="Sugiyama T."/>
            <person name="Ono T."/>
            <person name="Okano K."/>
            <person name="Yoshikawa Y."/>
            <person name="Aotsuka S."/>
            <person name="Sasaki N."/>
            <person name="Hattori A."/>
            <person name="Okumura K."/>
            <person name="Nagai K."/>
            <person name="Sugano S."/>
            <person name="Isogai T."/>
        </authorList>
    </citation>
    <scope>NUCLEOTIDE SEQUENCE [LARGE SCALE MRNA]</scope>
    <source>
        <tissue>Placenta</tissue>
    </source>
</reference>
<reference key="5">
    <citation type="journal article" date="2006" name="Nature">
        <title>The DNA sequence and biological annotation of human chromosome 1.</title>
        <authorList>
            <person name="Gregory S.G."/>
            <person name="Barlow K.F."/>
            <person name="McLay K.E."/>
            <person name="Kaul R."/>
            <person name="Swarbreck D."/>
            <person name="Dunham A."/>
            <person name="Scott C.E."/>
            <person name="Howe K.L."/>
            <person name="Woodfine K."/>
            <person name="Spencer C.C.A."/>
            <person name="Jones M.C."/>
            <person name="Gillson C."/>
            <person name="Searle S."/>
            <person name="Zhou Y."/>
            <person name="Kokocinski F."/>
            <person name="McDonald L."/>
            <person name="Evans R."/>
            <person name="Phillips K."/>
            <person name="Atkinson A."/>
            <person name="Cooper R."/>
            <person name="Jones C."/>
            <person name="Hall R.E."/>
            <person name="Andrews T.D."/>
            <person name="Lloyd C."/>
            <person name="Ainscough R."/>
            <person name="Almeida J.P."/>
            <person name="Ambrose K.D."/>
            <person name="Anderson F."/>
            <person name="Andrew R.W."/>
            <person name="Ashwell R.I.S."/>
            <person name="Aubin K."/>
            <person name="Babbage A.K."/>
            <person name="Bagguley C.L."/>
            <person name="Bailey J."/>
            <person name="Beasley H."/>
            <person name="Bethel G."/>
            <person name="Bird C.P."/>
            <person name="Bray-Allen S."/>
            <person name="Brown J.Y."/>
            <person name="Brown A.J."/>
            <person name="Buckley D."/>
            <person name="Burton J."/>
            <person name="Bye J."/>
            <person name="Carder C."/>
            <person name="Chapman J.C."/>
            <person name="Clark S.Y."/>
            <person name="Clarke G."/>
            <person name="Clee C."/>
            <person name="Cobley V."/>
            <person name="Collier R.E."/>
            <person name="Corby N."/>
            <person name="Coville G.J."/>
            <person name="Davies J."/>
            <person name="Deadman R."/>
            <person name="Dunn M."/>
            <person name="Earthrowl M."/>
            <person name="Ellington A.G."/>
            <person name="Errington H."/>
            <person name="Frankish A."/>
            <person name="Frankland J."/>
            <person name="French L."/>
            <person name="Garner P."/>
            <person name="Garnett J."/>
            <person name="Gay L."/>
            <person name="Ghori M.R.J."/>
            <person name="Gibson R."/>
            <person name="Gilby L.M."/>
            <person name="Gillett W."/>
            <person name="Glithero R.J."/>
            <person name="Grafham D.V."/>
            <person name="Griffiths C."/>
            <person name="Griffiths-Jones S."/>
            <person name="Grocock R."/>
            <person name="Hammond S."/>
            <person name="Harrison E.S.I."/>
            <person name="Hart E."/>
            <person name="Haugen E."/>
            <person name="Heath P.D."/>
            <person name="Holmes S."/>
            <person name="Holt K."/>
            <person name="Howden P.J."/>
            <person name="Hunt A.R."/>
            <person name="Hunt S.E."/>
            <person name="Hunter G."/>
            <person name="Isherwood J."/>
            <person name="James R."/>
            <person name="Johnson C."/>
            <person name="Johnson D."/>
            <person name="Joy A."/>
            <person name="Kay M."/>
            <person name="Kershaw J.K."/>
            <person name="Kibukawa M."/>
            <person name="Kimberley A.M."/>
            <person name="King A."/>
            <person name="Knights A.J."/>
            <person name="Lad H."/>
            <person name="Laird G."/>
            <person name="Lawlor S."/>
            <person name="Leongamornlert D.A."/>
            <person name="Lloyd D.M."/>
            <person name="Loveland J."/>
            <person name="Lovell J."/>
            <person name="Lush M.J."/>
            <person name="Lyne R."/>
            <person name="Martin S."/>
            <person name="Mashreghi-Mohammadi M."/>
            <person name="Matthews L."/>
            <person name="Matthews N.S.W."/>
            <person name="McLaren S."/>
            <person name="Milne S."/>
            <person name="Mistry S."/>
            <person name="Moore M.J.F."/>
            <person name="Nickerson T."/>
            <person name="O'Dell C.N."/>
            <person name="Oliver K."/>
            <person name="Palmeiri A."/>
            <person name="Palmer S.A."/>
            <person name="Parker A."/>
            <person name="Patel D."/>
            <person name="Pearce A.V."/>
            <person name="Peck A.I."/>
            <person name="Pelan S."/>
            <person name="Phelps K."/>
            <person name="Phillimore B.J."/>
            <person name="Plumb R."/>
            <person name="Rajan J."/>
            <person name="Raymond C."/>
            <person name="Rouse G."/>
            <person name="Saenphimmachak C."/>
            <person name="Sehra H.K."/>
            <person name="Sheridan E."/>
            <person name="Shownkeen R."/>
            <person name="Sims S."/>
            <person name="Skuce C.D."/>
            <person name="Smith M."/>
            <person name="Steward C."/>
            <person name="Subramanian S."/>
            <person name="Sycamore N."/>
            <person name="Tracey A."/>
            <person name="Tromans A."/>
            <person name="Van Helmond Z."/>
            <person name="Wall M."/>
            <person name="Wallis J.M."/>
            <person name="White S."/>
            <person name="Whitehead S.L."/>
            <person name="Wilkinson J.E."/>
            <person name="Willey D.L."/>
            <person name="Williams H."/>
            <person name="Wilming L."/>
            <person name="Wray P.W."/>
            <person name="Wu Z."/>
            <person name="Coulson A."/>
            <person name="Vaudin M."/>
            <person name="Sulston J.E."/>
            <person name="Durbin R.M."/>
            <person name="Hubbard T."/>
            <person name="Wooster R."/>
            <person name="Dunham I."/>
            <person name="Carter N.P."/>
            <person name="McVean G."/>
            <person name="Ross M.T."/>
            <person name="Harrow J."/>
            <person name="Olson M.V."/>
            <person name="Beck S."/>
            <person name="Rogers J."/>
            <person name="Bentley D.R."/>
        </authorList>
    </citation>
    <scope>NUCLEOTIDE SEQUENCE [LARGE SCALE GENOMIC DNA]</scope>
</reference>
<reference key="6">
    <citation type="submission" date="2005-09" db="EMBL/GenBank/DDBJ databases">
        <authorList>
            <person name="Mural R.J."/>
            <person name="Istrail S."/>
            <person name="Sutton G.G."/>
            <person name="Florea L."/>
            <person name="Halpern A.L."/>
            <person name="Mobarry C.M."/>
            <person name="Lippert R."/>
            <person name="Walenz B."/>
            <person name="Shatkay H."/>
            <person name="Dew I."/>
            <person name="Miller J.R."/>
            <person name="Flanigan M.J."/>
            <person name="Edwards N.J."/>
            <person name="Bolanos R."/>
            <person name="Fasulo D."/>
            <person name="Halldorsson B.V."/>
            <person name="Hannenhalli S."/>
            <person name="Turner R."/>
            <person name="Yooseph S."/>
            <person name="Lu F."/>
            <person name="Nusskern D.R."/>
            <person name="Shue B.C."/>
            <person name="Zheng X.H."/>
            <person name="Zhong F."/>
            <person name="Delcher A.L."/>
            <person name="Huson D.H."/>
            <person name="Kravitz S.A."/>
            <person name="Mouchard L."/>
            <person name="Reinert K."/>
            <person name="Remington K.A."/>
            <person name="Clark A.G."/>
            <person name="Waterman M.S."/>
            <person name="Eichler E.E."/>
            <person name="Adams M.D."/>
            <person name="Hunkapiller M.W."/>
            <person name="Myers E.W."/>
            <person name="Venter J.C."/>
        </authorList>
    </citation>
    <scope>NUCLEOTIDE SEQUENCE [LARGE SCALE GENOMIC DNA]</scope>
</reference>
<reference key="7">
    <citation type="journal article" date="2004" name="Genome Res.">
        <title>The status, quality, and expansion of the NIH full-length cDNA project: the Mammalian Gene Collection (MGC).</title>
        <authorList>
            <consortium name="The MGC Project Team"/>
        </authorList>
    </citation>
    <scope>NUCLEOTIDE SEQUENCE [LARGE SCALE MRNA]</scope>
    <source>
        <tissue>Brain</tissue>
        <tissue>Lung</tissue>
    </source>
</reference>
<reference key="8">
    <citation type="journal article" date="2010" name="J. Biol. Chem.">
        <title>The novel membrane protein TMEM59 modulates complex glycosylation, cell surface expression, and secretion of the amyloid precursor protein.</title>
        <authorList>
            <person name="Ullrich S."/>
            <person name="Munch A."/>
            <person name="Neumann S."/>
            <person name="Kremmer E."/>
            <person name="Tatzelt J."/>
            <person name="Lichtenthaler S.F."/>
        </authorList>
    </citation>
    <scope>FUNCTION</scope>
    <scope>GLYCOSYLATION</scope>
    <scope>SUBCELLULAR LOCATION</scope>
</reference>
<reference key="9">
    <citation type="journal article" date="2013" name="EMBO J.">
        <title>TMEM59 defines a novel ATG16L1-binding motif that promotes local activation of LC3.</title>
        <authorList>
            <person name="Boada-Romero E."/>
            <person name="Letek M."/>
            <person name="Fleischer A."/>
            <person name="Pallauf K."/>
            <person name="Ramon-Barros C."/>
            <person name="Pimentel-Muinos F.X."/>
        </authorList>
    </citation>
    <scope>FUNCTION</scope>
    <scope>SUBCELLULAR LOCATION</scope>
    <scope>TOPOLOGY</scope>
    <scope>TISSUE SPECIFICITY</scope>
    <scope>INTERACTION WITH ATG16L1</scope>
    <scope>MUTAGENESIS OF TYR-268; GLU-272; TYR-277 AND LEU-280</scope>
</reference>
<reference key="10">
    <citation type="journal article" date="2016" name="Nat. Commun.">
        <title>The T300A Crohn's disease risk polymorphism impairs function of the WD40 domain of ATG16L1.</title>
        <authorList>
            <person name="Boada-Romero E."/>
            <person name="Serramito-Gomez I."/>
            <person name="Sacristan M.P."/>
            <person name="Boone D.L."/>
            <person name="Xavier R.J."/>
            <person name="Pimentel-Muinos F.X."/>
        </authorList>
    </citation>
    <scope>FUNCTION</scope>
    <scope>INTERACTION WITH ATG16L1</scope>
    <scope>SUBCELLULAR LOCATION</scope>
    <scope>MUTAGENESIS OF TYR-268; VAL-269; GLU-272; LYS-273; TYR-277; GLY-278 AND LEU-280</scope>
</reference>
<protein>
    <recommendedName>
        <fullName>Transmembrane protein 59</fullName>
    </recommendedName>
    <alternativeName>
        <fullName>Liver membrane-bound protein</fullName>
    </alternativeName>
</protein>
<proteinExistence type="evidence at protein level"/>
<evidence type="ECO:0000250" key="1">
    <source>
        <dbReference type="UniProtKB" id="Q9QY73"/>
    </source>
</evidence>
<evidence type="ECO:0000255" key="2"/>
<evidence type="ECO:0000269" key="3">
    <source>
    </source>
</evidence>
<evidence type="ECO:0000269" key="4">
    <source>
    </source>
</evidence>
<evidence type="ECO:0000269" key="5">
    <source>
    </source>
</evidence>
<evidence type="ECO:0000269" key="6">
    <source>
    </source>
</evidence>
<evidence type="ECO:0000305" key="7"/>
<evidence type="ECO:0000305" key="8">
    <source>
    </source>
</evidence>
<feature type="signal peptide" evidence="2">
    <location>
        <begin position="1"/>
        <end position="35"/>
    </location>
</feature>
<feature type="chain" id="PRO_0000003003" description="Transmembrane protein 59">
    <location>
        <begin position="36"/>
        <end position="323"/>
    </location>
</feature>
<feature type="topological domain" description="Extracellular" evidence="2">
    <location>
        <begin position="36"/>
        <end position="238"/>
    </location>
</feature>
<feature type="transmembrane region" description="Helical" evidence="2">
    <location>
        <begin position="239"/>
        <end position="259"/>
    </location>
</feature>
<feature type="topological domain" description="Cytoplasmic" evidence="2">
    <location>
        <begin position="260"/>
        <end position="323"/>
    </location>
</feature>
<feature type="short sequence motif" description="ATG16L1-binding motif" evidence="5 6">
    <location>
        <begin position="263"/>
        <end position="281"/>
    </location>
</feature>
<feature type="modified residue" description="Phosphothreonine" evidence="1">
    <location>
        <position position="303"/>
    </location>
</feature>
<feature type="glycosylation site" description="N-linked (GlcNAc...) asparagine" evidence="8">
    <location>
        <position position="90"/>
    </location>
</feature>
<feature type="sequence variant" id="VAR_063397" description="In dbSNP:rs41294776." evidence="3">
    <original>A</original>
    <variation>V</variation>
    <location>
        <position position="46"/>
    </location>
</feature>
<feature type="mutagenesis site" description="Impaired ability to activate LC3. Impaired interaction with ATG16L1." evidence="5 6">
    <original>Y</original>
    <variation>A</variation>
    <variation>F</variation>
    <location>
        <position position="268"/>
    </location>
</feature>
<feature type="mutagenesis site" description="Does not affect ability to activate LC3." evidence="5">
    <original>Y</original>
    <variation>W</variation>
    <location>
        <position position="268"/>
    </location>
</feature>
<feature type="mutagenesis site" description="No effect on interaction with ATG16L1." evidence="6">
    <original>V</original>
    <variation>A</variation>
    <location>
        <position position="269"/>
    </location>
</feature>
<feature type="mutagenesis site" description="Does not affect ability to activate LC3. No effect on interaction with ATG16L1." evidence="5 6">
    <original>E</original>
    <variation>A</variation>
    <variation>D</variation>
    <location>
        <position position="272"/>
    </location>
</feature>
<feature type="mutagenesis site" description="No effect on interaction with ATG16L1." evidence="6">
    <original>K</original>
    <variation>A</variation>
    <location>
        <position position="273"/>
    </location>
</feature>
<feature type="mutagenesis site" description="Impaired ability to activate LC3. Impaired interaction with ATG16L1." evidence="5 6">
    <original>Y</original>
    <variation>A</variation>
    <location>
        <position position="277"/>
    </location>
</feature>
<feature type="mutagenesis site" description="Does not affect ability to activate LC3." evidence="5">
    <original>Y</original>
    <variation>W</variation>
    <variation>F</variation>
    <location>
        <position position="277"/>
    </location>
</feature>
<feature type="mutagenesis site" description="No effect on interaction with ATG16L1." evidence="6">
    <original>G</original>
    <variation>A</variation>
    <location>
        <position position="278"/>
    </location>
</feature>
<feature type="mutagenesis site" description="Impaired ability to activate LC3. Impaired interaction with ATG16L1." evidence="5 6">
    <original>L</original>
    <variation>A</variation>
    <variation>V</variation>
    <location>
        <position position="280"/>
    </location>
</feature>
<feature type="sequence conflict" description="In Ref. 7; AAH16374." evidence="7" ref="7">
    <original>Y</original>
    <variation>SD</variation>
    <location>
        <position position="209"/>
    </location>
</feature>
<keyword id="KW-0072">Autophagy</keyword>
<keyword id="KW-1003">Cell membrane</keyword>
<keyword id="KW-0967">Endosome</keyword>
<keyword id="KW-0325">Glycoprotein</keyword>
<keyword id="KW-0333">Golgi apparatus</keyword>
<keyword id="KW-0458">Lysosome</keyword>
<keyword id="KW-0472">Membrane</keyword>
<keyword id="KW-0597">Phosphoprotein</keyword>
<keyword id="KW-1267">Proteomics identification</keyword>
<keyword id="KW-1185">Reference proteome</keyword>
<keyword id="KW-0732">Signal</keyword>
<keyword id="KW-0812">Transmembrane</keyword>
<keyword id="KW-1133">Transmembrane helix</keyword>